<accession>P86599</accession>
<protein>
    <recommendedName>
        <fullName evidence="4">Fibrinolytic protease</fullName>
        <ecNumber>3.4.21.-</ecNumber>
    </recommendedName>
</protein>
<reference evidence="5" key="1">
    <citation type="submission" date="2010-05" db="UniProtKB">
        <title>Isolation and characterization of fibrinolytic enzyme from Antarctic krill.</title>
        <authorList>
            <person name="Maehashi K."/>
            <person name="Inaba T."/>
            <person name="Kashiwagi Y."/>
        </authorList>
    </citation>
    <scope>PROTEIN SEQUENCE</scope>
    <scope>FUNCTION</scope>
</reference>
<feature type="chain" id="PRO_0000395363" description="Fibrinolytic protease">
    <location>
        <begin position="1"/>
        <end position="40" status="greater than"/>
    </location>
</feature>
<feature type="domain" description="Peptidase S1" evidence="2">
    <location>
        <begin position="1"/>
        <end position="40" status="greater than"/>
    </location>
</feature>
<feature type="disulfide bond" evidence="1 2">
    <location>
        <begin position="26"/>
        <end status="unknown"/>
    </location>
</feature>
<feature type="non-consecutive residues" evidence="4">
    <location>
        <begin position="30"/>
        <end position="31"/>
    </location>
</feature>
<feature type="non-terminal residue" evidence="4">
    <location>
        <position position="40"/>
    </location>
</feature>
<sequence length="40" mass="4314">IVGGNEVTPHAYPWQVGLFIDDMYFCGGSISVTLTGWGKP</sequence>
<comment type="function">
    <text evidence="3">Serine protease with fibrinolytic activity.</text>
</comment>
<comment type="subcellular location">
    <subcellularLocation>
        <location evidence="1">Secreted</location>
        <location evidence="1">Extracellular space</location>
    </subcellularLocation>
</comment>
<comment type="similarity">
    <text evidence="2">Belongs to the peptidase S1 family.</text>
</comment>
<evidence type="ECO:0000250" key="1">
    <source>
        <dbReference type="UniProtKB" id="P00771"/>
    </source>
</evidence>
<evidence type="ECO:0000255" key="2">
    <source>
        <dbReference type="PROSITE-ProRule" id="PRU00274"/>
    </source>
</evidence>
<evidence type="ECO:0000269" key="3">
    <source ref="1"/>
</evidence>
<evidence type="ECO:0000303" key="4">
    <source ref="1"/>
</evidence>
<evidence type="ECO:0000305" key="5"/>
<dbReference type="EC" id="3.4.21.-"/>
<dbReference type="SMR" id="P86599"/>
<dbReference type="GO" id="GO:0005576">
    <property type="term" value="C:extracellular region"/>
    <property type="evidence" value="ECO:0007669"/>
    <property type="project" value="UniProtKB-SubCell"/>
</dbReference>
<dbReference type="GO" id="GO:0004252">
    <property type="term" value="F:serine-type endopeptidase activity"/>
    <property type="evidence" value="ECO:0007669"/>
    <property type="project" value="InterPro"/>
</dbReference>
<dbReference type="GO" id="GO:0090729">
    <property type="term" value="F:toxin activity"/>
    <property type="evidence" value="ECO:0007669"/>
    <property type="project" value="UniProtKB-KW"/>
</dbReference>
<dbReference type="GO" id="GO:0006508">
    <property type="term" value="P:proteolysis"/>
    <property type="evidence" value="ECO:0007669"/>
    <property type="project" value="UniProtKB-KW"/>
</dbReference>
<dbReference type="Gene3D" id="2.40.10.10">
    <property type="entry name" value="Trypsin-like serine proteases"/>
    <property type="match status" value="1"/>
</dbReference>
<dbReference type="InterPro" id="IPR009003">
    <property type="entry name" value="Peptidase_S1_PA"/>
</dbReference>
<dbReference type="InterPro" id="IPR043504">
    <property type="entry name" value="Peptidase_S1_PA_chymotrypsin"/>
</dbReference>
<dbReference type="InterPro" id="IPR001254">
    <property type="entry name" value="Trypsin_dom"/>
</dbReference>
<dbReference type="Pfam" id="PF00089">
    <property type="entry name" value="Trypsin"/>
    <property type="match status" value="1"/>
</dbReference>
<dbReference type="SUPFAM" id="SSF50494">
    <property type="entry name" value="Trypsin-like serine proteases"/>
    <property type="match status" value="1"/>
</dbReference>
<organism>
    <name type="scientific">Euphausia superba</name>
    <name type="common">Antarctic krill</name>
    <dbReference type="NCBI Taxonomy" id="6819"/>
    <lineage>
        <taxon>Eukaryota</taxon>
        <taxon>Metazoa</taxon>
        <taxon>Ecdysozoa</taxon>
        <taxon>Arthropoda</taxon>
        <taxon>Crustacea</taxon>
        <taxon>Multicrustacea</taxon>
        <taxon>Malacostraca</taxon>
        <taxon>Eumalacostraca</taxon>
        <taxon>Eucarida</taxon>
        <taxon>Euphausiacea</taxon>
        <taxon>Euphausiidae</taxon>
        <taxon>Euphausia</taxon>
    </lineage>
</organism>
<keyword id="KW-0903">Direct protein sequencing</keyword>
<keyword id="KW-1015">Disulfide bond</keyword>
<keyword id="KW-1205">Fibrinolytic toxin</keyword>
<keyword id="KW-1199">Hemostasis impairing toxin</keyword>
<keyword id="KW-0378">Hydrolase</keyword>
<keyword id="KW-0645">Protease</keyword>
<keyword id="KW-0964">Secreted</keyword>
<keyword id="KW-0720">Serine protease</keyword>
<keyword id="KW-0800">Toxin</keyword>
<name>FIBS_EUPSU</name>
<proteinExistence type="evidence at protein level"/>